<evidence type="ECO:0000255" key="1">
    <source>
        <dbReference type="HAMAP-Rule" id="MF_01463"/>
    </source>
</evidence>
<name>SECD_RICCN</name>
<feature type="chain" id="PRO_0000272634" description="Protein translocase subunit SecD">
    <location>
        <begin position="1"/>
        <end position="518"/>
    </location>
</feature>
<feature type="transmembrane region" description="Helical" evidence="1">
    <location>
        <begin position="9"/>
        <end position="29"/>
    </location>
</feature>
<feature type="transmembrane region" description="Helical" evidence="1">
    <location>
        <begin position="361"/>
        <end position="381"/>
    </location>
</feature>
<feature type="transmembrane region" description="Helical" evidence="1">
    <location>
        <begin position="384"/>
        <end position="404"/>
    </location>
</feature>
<feature type="transmembrane region" description="Helical" evidence="1">
    <location>
        <begin position="406"/>
        <end position="426"/>
    </location>
</feature>
<feature type="transmembrane region" description="Helical" evidence="1">
    <location>
        <begin position="452"/>
        <end position="474"/>
    </location>
</feature>
<feature type="transmembrane region" description="Helical" evidence="1">
    <location>
        <begin position="486"/>
        <end position="506"/>
    </location>
</feature>
<protein>
    <recommendedName>
        <fullName evidence="1">Protein translocase subunit SecD</fullName>
    </recommendedName>
</protein>
<proteinExistence type="inferred from homology"/>
<comment type="function">
    <text evidence="1">Part of the Sec protein translocase complex. Interacts with the SecYEG preprotein conducting channel. SecDF uses the proton motive force (PMF) to complete protein translocation after the ATP-dependent function of SecA.</text>
</comment>
<comment type="subunit">
    <text evidence="1">Forms a complex with SecF. Part of the essential Sec protein translocation apparatus which comprises SecA, SecYEG and auxiliary proteins SecDF-YajC and YidC.</text>
</comment>
<comment type="subcellular location">
    <subcellularLocation>
        <location evidence="1">Cell inner membrane</location>
        <topology evidence="1">Multi-pass membrane protein</topology>
    </subcellularLocation>
</comment>
<comment type="similarity">
    <text evidence="1">Belongs to the SecD/SecF family. SecD subfamily.</text>
</comment>
<gene>
    <name evidence="1" type="primary">secD</name>
    <name type="ordered locus">RC0894</name>
</gene>
<sequence>MQKLPKWKIFLSIICTVFAVICALPNFMQVNSKFLPHDSVNLGLDLRGGAHLLLDVDFDTYLNDSMENLADTLRKNFREDKIGYKNLLVRQNSIQLEVRSPEKLKPLKKIINKIDPEIIAEVNENKIKLSYSESRLNDLLNKVVDQSIEIVRMRVDSTGTKEPTLQKQGDKHILLQVPGEENPSYLKNILGKTAKLTFHLVDENANIEEAVKGHVPVGSMLVKGDNASHGEYYVVIKKKVVLGGDQLTTASASFDQNSQAVVAFSFNNLGSKIFGEITKNNIGKRLAIVLDNKLLSAPTINGAIMGGSGIITGNFTVESANELALLLRAGSLPAPLKIIEERSIGPNLGADSIESGKKAGLIGFIAVCIFMVWSYGVLGLFANIALSLALLYILALLSLFQATLTLPGIAGIILTMGMAVDANVLIYERIKEELHKGVSTLYAIRTGFESAFATILDANLTTLIVAFLLYIFGVGAIKGFAVALTIGIISSMFSAIIITKLLIDIWVQYFKPKKLGLV</sequence>
<reference key="1">
    <citation type="journal article" date="2001" name="Science">
        <title>Mechanisms of evolution in Rickettsia conorii and R. prowazekii.</title>
        <authorList>
            <person name="Ogata H."/>
            <person name="Audic S."/>
            <person name="Renesto-Audiffren P."/>
            <person name="Fournier P.-E."/>
            <person name="Barbe V."/>
            <person name="Samson D."/>
            <person name="Roux V."/>
            <person name="Cossart P."/>
            <person name="Weissenbach J."/>
            <person name="Claverie J.-M."/>
            <person name="Raoult D."/>
        </authorList>
    </citation>
    <scope>NUCLEOTIDE SEQUENCE [LARGE SCALE GENOMIC DNA]</scope>
    <source>
        <strain>ATCC VR-613 / Malish 7</strain>
    </source>
</reference>
<keyword id="KW-0997">Cell inner membrane</keyword>
<keyword id="KW-1003">Cell membrane</keyword>
<keyword id="KW-0472">Membrane</keyword>
<keyword id="KW-0653">Protein transport</keyword>
<keyword id="KW-0811">Translocation</keyword>
<keyword id="KW-0812">Transmembrane</keyword>
<keyword id="KW-1133">Transmembrane helix</keyword>
<keyword id="KW-0813">Transport</keyword>
<organism>
    <name type="scientific">Rickettsia conorii (strain ATCC VR-613 / Malish 7)</name>
    <dbReference type="NCBI Taxonomy" id="272944"/>
    <lineage>
        <taxon>Bacteria</taxon>
        <taxon>Pseudomonadati</taxon>
        <taxon>Pseudomonadota</taxon>
        <taxon>Alphaproteobacteria</taxon>
        <taxon>Rickettsiales</taxon>
        <taxon>Rickettsiaceae</taxon>
        <taxon>Rickettsieae</taxon>
        <taxon>Rickettsia</taxon>
        <taxon>spotted fever group</taxon>
    </lineage>
</organism>
<accession>Q92H77</accession>
<dbReference type="EMBL" id="AE006914">
    <property type="protein sequence ID" value="AAL03432.1"/>
    <property type="molecule type" value="Genomic_DNA"/>
</dbReference>
<dbReference type="PIR" id="F97811">
    <property type="entry name" value="F97811"/>
</dbReference>
<dbReference type="RefSeq" id="WP_010977497.1">
    <property type="nucleotide sequence ID" value="NC_003103.1"/>
</dbReference>
<dbReference type="SMR" id="Q92H77"/>
<dbReference type="GeneID" id="928868"/>
<dbReference type="KEGG" id="rco:RC0894"/>
<dbReference type="PATRIC" id="fig|272944.4.peg.1018"/>
<dbReference type="HOGENOM" id="CLU_007894_4_3_5"/>
<dbReference type="Proteomes" id="UP000000816">
    <property type="component" value="Chromosome"/>
</dbReference>
<dbReference type="GO" id="GO:0005886">
    <property type="term" value="C:plasma membrane"/>
    <property type="evidence" value="ECO:0007669"/>
    <property type="project" value="UniProtKB-SubCell"/>
</dbReference>
<dbReference type="GO" id="GO:0015450">
    <property type="term" value="F:protein-transporting ATPase activity"/>
    <property type="evidence" value="ECO:0007669"/>
    <property type="project" value="InterPro"/>
</dbReference>
<dbReference type="GO" id="GO:0065002">
    <property type="term" value="P:intracellular protein transmembrane transport"/>
    <property type="evidence" value="ECO:0007669"/>
    <property type="project" value="UniProtKB-UniRule"/>
</dbReference>
<dbReference type="GO" id="GO:0006605">
    <property type="term" value="P:protein targeting"/>
    <property type="evidence" value="ECO:0007669"/>
    <property type="project" value="UniProtKB-UniRule"/>
</dbReference>
<dbReference type="GO" id="GO:0043952">
    <property type="term" value="P:protein transport by the Sec complex"/>
    <property type="evidence" value="ECO:0007669"/>
    <property type="project" value="UniProtKB-UniRule"/>
</dbReference>
<dbReference type="FunFam" id="3.30.1360.200:FF:000002">
    <property type="entry name" value="Preprotein translocase subunit SecD"/>
    <property type="match status" value="1"/>
</dbReference>
<dbReference type="FunFam" id="1.20.1640.10:FF:000004">
    <property type="entry name" value="Protein translocase subunit SecD"/>
    <property type="match status" value="1"/>
</dbReference>
<dbReference type="Gene3D" id="3.30.1360.200">
    <property type="match status" value="1"/>
</dbReference>
<dbReference type="Gene3D" id="3.30.70.3400">
    <property type="match status" value="2"/>
</dbReference>
<dbReference type="Gene3D" id="1.20.1640.10">
    <property type="entry name" value="Multidrug efflux transporter AcrB transmembrane domain"/>
    <property type="match status" value="1"/>
</dbReference>
<dbReference type="HAMAP" id="MF_01463_B">
    <property type="entry name" value="SecD_B"/>
    <property type="match status" value="1"/>
</dbReference>
<dbReference type="InterPro" id="IPR001036">
    <property type="entry name" value="Acrflvin-R"/>
</dbReference>
<dbReference type="InterPro" id="IPR005791">
    <property type="entry name" value="SecD"/>
</dbReference>
<dbReference type="InterPro" id="IPR022813">
    <property type="entry name" value="SecD/SecF_arch_bac"/>
</dbReference>
<dbReference type="InterPro" id="IPR048631">
    <property type="entry name" value="SecD_1st"/>
</dbReference>
<dbReference type="InterPro" id="IPR048634">
    <property type="entry name" value="SecD_SecF_C"/>
</dbReference>
<dbReference type="InterPro" id="IPR055344">
    <property type="entry name" value="SecD_SecF_C_bact"/>
</dbReference>
<dbReference type="InterPro" id="IPR054384">
    <property type="entry name" value="SecDF_P1_head"/>
</dbReference>
<dbReference type="NCBIfam" id="TIGR00916">
    <property type="entry name" value="2A0604s01"/>
    <property type="match status" value="1"/>
</dbReference>
<dbReference type="NCBIfam" id="TIGR01129">
    <property type="entry name" value="secD"/>
    <property type="match status" value="1"/>
</dbReference>
<dbReference type="PANTHER" id="PTHR30081:SF1">
    <property type="entry name" value="PROTEIN TRANSLOCASE SUBUNIT SECD"/>
    <property type="match status" value="1"/>
</dbReference>
<dbReference type="PANTHER" id="PTHR30081">
    <property type="entry name" value="PROTEIN-EXPORT MEMBRANE PROTEIN SEC"/>
    <property type="match status" value="1"/>
</dbReference>
<dbReference type="Pfam" id="PF21760">
    <property type="entry name" value="SecD_1st"/>
    <property type="match status" value="1"/>
</dbReference>
<dbReference type="Pfam" id="PF02355">
    <property type="entry name" value="SecD_SecF_C"/>
    <property type="match status" value="1"/>
</dbReference>
<dbReference type="Pfam" id="PF22599">
    <property type="entry name" value="SecDF_P1_head"/>
    <property type="match status" value="1"/>
</dbReference>
<dbReference type="PRINTS" id="PR00702">
    <property type="entry name" value="ACRIFLAVINRP"/>
</dbReference>
<dbReference type="SUPFAM" id="SSF82866">
    <property type="entry name" value="Multidrug efflux transporter AcrB transmembrane domain"/>
    <property type="match status" value="1"/>
</dbReference>